<comment type="function">
    <text>May be involved in transcriptional regulation.</text>
</comment>
<comment type="subcellular location">
    <subcellularLocation>
        <location evidence="3">Nucleus</location>
    </subcellularLocation>
</comment>
<comment type="similarity">
    <text evidence="3">Belongs to the krueppel C2H2-type zinc-finger protein family.</text>
</comment>
<feature type="chain" id="PRO_0000280440" description="Zinc finger protein 771">
    <location>
        <begin position="1"/>
        <end position="317"/>
    </location>
</feature>
<feature type="zinc finger region" description="C2H2-type 1" evidence="2">
    <location>
        <begin position="63"/>
        <end position="85"/>
    </location>
</feature>
<feature type="zinc finger region" description="C2H2-type 2" evidence="2">
    <location>
        <begin position="91"/>
        <end position="113"/>
    </location>
</feature>
<feature type="zinc finger region" description="C2H2-type 3" evidence="2">
    <location>
        <begin position="119"/>
        <end position="141"/>
    </location>
</feature>
<feature type="zinc finger region" description="C2H2-type 4" evidence="2">
    <location>
        <begin position="147"/>
        <end position="169"/>
    </location>
</feature>
<feature type="zinc finger region" description="C2H2-type 5" evidence="2">
    <location>
        <begin position="175"/>
        <end position="197"/>
    </location>
</feature>
<feature type="zinc finger region" description="C2H2-type 6" evidence="2">
    <location>
        <begin position="203"/>
        <end position="225"/>
    </location>
</feature>
<feature type="zinc finger region" description="C2H2-type 7" evidence="2">
    <location>
        <begin position="231"/>
        <end position="253"/>
    </location>
</feature>
<feature type="zinc finger region" description="C2H2-type 8" evidence="2">
    <location>
        <begin position="259"/>
        <end position="281"/>
    </location>
</feature>
<feature type="cross-link" description="Glycyl lysine isopeptide (Lys-Gly) (interchain with G-Cter in SUMO2)" evidence="1">
    <location>
        <position position="33"/>
    </location>
</feature>
<sequence>MPGEQQAEEEEEEEMQEEMVLLVKGEEEEGEEKYEVVKLKIPVDNKEVASQMPAPSADPARPHACPDCGRAFARRSTLAKHARTHTGERPFACTECGRCFSQKSALTKHGRTHTGERPYQCPECDKRFSAASNLRQHRRRHTGEKPYACAHCGRRFAQSSNYAQHLRVHTGEKPYACPDCGRAFGGSSCLARHRRTHTGERPYACADCGTRFAQSSALAKHRRVHTGEKPHRCAVCGRRFGHRSNLAEHARTHTGERPYPCTECGRRFRLSSHFIRHRRAHMRRRLYICAGCGRDFKLPASATAATPTERCPECEGS</sequence>
<evidence type="ECO:0000250" key="1">
    <source>
        <dbReference type="UniProtKB" id="Q7L3S4"/>
    </source>
</evidence>
<evidence type="ECO:0000255" key="2">
    <source>
        <dbReference type="PROSITE-ProRule" id="PRU00042"/>
    </source>
</evidence>
<evidence type="ECO:0000305" key="3"/>
<accession>Q8BJ90</accession>
<accession>B2RSX6</accession>
<accession>Q6P5I0</accession>
<gene>
    <name type="primary">Znf771</name>
    <name type="synonym">Zfp771</name>
</gene>
<dbReference type="EMBL" id="AK090240">
    <property type="protein sequence ID" value="BAC41144.1"/>
    <property type="molecule type" value="mRNA"/>
</dbReference>
<dbReference type="EMBL" id="BC062882">
    <property type="protein sequence ID" value="AAH62882.1"/>
    <property type="molecule type" value="mRNA"/>
</dbReference>
<dbReference type="EMBL" id="BC139048">
    <property type="protein sequence ID" value="AAI39049.1"/>
    <property type="molecule type" value="mRNA"/>
</dbReference>
<dbReference type="EMBL" id="BC139049">
    <property type="protein sequence ID" value="AAI39050.1"/>
    <property type="molecule type" value="mRNA"/>
</dbReference>
<dbReference type="EMBL" id="BC145524">
    <property type="protein sequence ID" value="AAI45525.1"/>
    <property type="molecule type" value="mRNA"/>
</dbReference>
<dbReference type="CCDS" id="CCDS21861.1"/>
<dbReference type="RefSeq" id="NP_796336.1">
    <property type="nucleotide sequence ID" value="NM_177362.3"/>
</dbReference>
<dbReference type="RefSeq" id="XP_006507906.1">
    <property type="nucleotide sequence ID" value="XM_006507843.2"/>
</dbReference>
<dbReference type="SMR" id="Q8BJ90"/>
<dbReference type="BioGRID" id="232624">
    <property type="interactions" value="2"/>
</dbReference>
<dbReference type="STRING" id="10090.ENSMUSP00000056959"/>
<dbReference type="GlyGen" id="Q8BJ90">
    <property type="glycosylation" value="1 site, 1 O-linked glycan (1 site)"/>
</dbReference>
<dbReference type="iPTMnet" id="Q8BJ90"/>
<dbReference type="PhosphoSitePlus" id="Q8BJ90"/>
<dbReference type="PaxDb" id="10090-ENSMUSP00000056959"/>
<dbReference type="PeptideAtlas" id="Q8BJ90"/>
<dbReference type="ProteomicsDB" id="299601"/>
<dbReference type="Pumba" id="Q8BJ90"/>
<dbReference type="Antibodypedia" id="27266">
    <property type="antibodies" value="74 antibodies from 19 providers"/>
</dbReference>
<dbReference type="DNASU" id="244216"/>
<dbReference type="Ensembl" id="ENSMUST00000052509.6">
    <property type="protein sequence ID" value="ENSMUSP00000056959.4"/>
    <property type="gene ID" value="ENSMUSG00000054716.5"/>
</dbReference>
<dbReference type="GeneID" id="244216"/>
<dbReference type="KEGG" id="mmu:244216"/>
<dbReference type="UCSC" id="uc009juv.1">
    <property type="organism name" value="mouse"/>
</dbReference>
<dbReference type="AGR" id="MGI:2442050"/>
<dbReference type="CTD" id="244216"/>
<dbReference type="MGI" id="MGI:2442050">
    <property type="gene designation" value="Zfp771"/>
</dbReference>
<dbReference type="VEuPathDB" id="HostDB:ENSMUSG00000054716"/>
<dbReference type="eggNOG" id="KOG1721">
    <property type="taxonomic scope" value="Eukaryota"/>
</dbReference>
<dbReference type="GeneTree" id="ENSGT00940000162367"/>
<dbReference type="HOGENOM" id="CLU_002678_2_6_1"/>
<dbReference type="InParanoid" id="Q8BJ90"/>
<dbReference type="OMA" id="RLYICEG"/>
<dbReference type="OrthoDB" id="8113227at2759"/>
<dbReference type="PhylomeDB" id="Q8BJ90"/>
<dbReference type="TreeFam" id="TF350834"/>
<dbReference type="BioGRID-ORCS" id="244216">
    <property type="hits" value="8 hits in 78 CRISPR screens"/>
</dbReference>
<dbReference type="ChiTaRS" id="Zfp771">
    <property type="organism name" value="mouse"/>
</dbReference>
<dbReference type="PRO" id="PR:Q8BJ90"/>
<dbReference type="Proteomes" id="UP000000589">
    <property type="component" value="Chromosome 7"/>
</dbReference>
<dbReference type="RNAct" id="Q8BJ90">
    <property type="molecule type" value="protein"/>
</dbReference>
<dbReference type="Bgee" id="ENSMUSG00000054716">
    <property type="expression patterns" value="Expressed in internal carotid artery and 221 other cell types or tissues"/>
</dbReference>
<dbReference type="ExpressionAtlas" id="Q8BJ90">
    <property type="expression patterns" value="baseline and differential"/>
</dbReference>
<dbReference type="GO" id="GO:0005730">
    <property type="term" value="C:nucleolus"/>
    <property type="evidence" value="ECO:0007669"/>
    <property type="project" value="Ensembl"/>
</dbReference>
<dbReference type="GO" id="GO:0005654">
    <property type="term" value="C:nucleoplasm"/>
    <property type="evidence" value="ECO:0007669"/>
    <property type="project" value="Ensembl"/>
</dbReference>
<dbReference type="GO" id="GO:1990837">
    <property type="term" value="F:sequence-specific double-stranded DNA binding"/>
    <property type="evidence" value="ECO:0007669"/>
    <property type="project" value="Ensembl"/>
</dbReference>
<dbReference type="GO" id="GO:0008270">
    <property type="term" value="F:zinc ion binding"/>
    <property type="evidence" value="ECO:0007669"/>
    <property type="project" value="UniProtKB-KW"/>
</dbReference>
<dbReference type="FunFam" id="3.30.160.60:FF:000212">
    <property type="entry name" value="zinc finger protein 382 isoform X2"/>
    <property type="match status" value="1"/>
</dbReference>
<dbReference type="FunFam" id="3.30.160.60:FF:001199">
    <property type="entry name" value="Zinc finger protein 771"/>
    <property type="match status" value="1"/>
</dbReference>
<dbReference type="FunFam" id="3.30.160.60:FF:001280">
    <property type="entry name" value="Zinc finger protein 771"/>
    <property type="match status" value="1"/>
</dbReference>
<dbReference type="FunFam" id="3.30.160.60:FF:000516">
    <property type="entry name" value="zinc finger protein 771"/>
    <property type="match status" value="3"/>
</dbReference>
<dbReference type="FunFam" id="3.30.160.60:FF:000933">
    <property type="entry name" value="zinc finger protein 771"/>
    <property type="match status" value="1"/>
</dbReference>
<dbReference type="FunFam" id="3.30.160.60:FF:001323">
    <property type="entry name" value="zinc finger protein 771"/>
    <property type="match status" value="1"/>
</dbReference>
<dbReference type="Gene3D" id="3.30.160.60">
    <property type="entry name" value="Classic Zinc Finger"/>
    <property type="match status" value="8"/>
</dbReference>
<dbReference type="InterPro" id="IPR036236">
    <property type="entry name" value="Znf_C2H2_sf"/>
</dbReference>
<dbReference type="InterPro" id="IPR013087">
    <property type="entry name" value="Znf_C2H2_type"/>
</dbReference>
<dbReference type="PANTHER" id="PTHR24394">
    <property type="entry name" value="ZINC FINGER PROTEIN"/>
    <property type="match status" value="1"/>
</dbReference>
<dbReference type="PANTHER" id="PTHR24394:SF44">
    <property type="entry name" value="ZINC FINGER PROTEIN 271-LIKE"/>
    <property type="match status" value="1"/>
</dbReference>
<dbReference type="Pfam" id="PF00096">
    <property type="entry name" value="zf-C2H2"/>
    <property type="match status" value="8"/>
</dbReference>
<dbReference type="SMART" id="SM00355">
    <property type="entry name" value="ZnF_C2H2"/>
    <property type="match status" value="8"/>
</dbReference>
<dbReference type="SUPFAM" id="SSF57667">
    <property type="entry name" value="beta-beta-alpha zinc fingers"/>
    <property type="match status" value="5"/>
</dbReference>
<dbReference type="PROSITE" id="PS00028">
    <property type="entry name" value="ZINC_FINGER_C2H2_1"/>
    <property type="match status" value="8"/>
</dbReference>
<dbReference type="PROSITE" id="PS50157">
    <property type="entry name" value="ZINC_FINGER_C2H2_2"/>
    <property type="match status" value="8"/>
</dbReference>
<keyword id="KW-0238">DNA-binding</keyword>
<keyword id="KW-1017">Isopeptide bond</keyword>
<keyword id="KW-0479">Metal-binding</keyword>
<keyword id="KW-0539">Nucleus</keyword>
<keyword id="KW-1185">Reference proteome</keyword>
<keyword id="KW-0677">Repeat</keyword>
<keyword id="KW-0804">Transcription</keyword>
<keyword id="KW-0805">Transcription regulation</keyword>
<keyword id="KW-0832">Ubl conjugation</keyword>
<keyword id="KW-0862">Zinc</keyword>
<keyword id="KW-0863">Zinc-finger</keyword>
<reference key="1">
    <citation type="journal article" date="2005" name="Science">
        <title>The transcriptional landscape of the mammalian genome.</title>
        <authorList>
            <person name="Carninci P."/>
            <person name="Kasukawa T."/>
            <person name="Katayama S."/>
            <person name="Gough J."/>
            <person name="Frith M.C."/>
            <person name="Maeda N."/>
            <person name="Oyama R."/>
            <person name="Ravasi T."/>
            <person name="Lenhard B."/>
            <person name="Wells C."/>
            <person name="Kodzius R."/>
            <person name="Shimokawa K."/>
            <person name="Bajic V.B."/>
            <person name="Brenner S.E."/>
            <person name="Batalov S."/>
            <person name="Forrest A.R."/>
            <person name="Zavolan M."/>
            <person name="Davis M.J."/>
            <person name="Wilming L.G."/>
            <person name="Aidinis V."/>
            <person name="Allen J.E."/>
            <person name="Ambesi-Impiombato A."/>
            <person name="Apweiler R."/>
            <person name="Aturaliya R.N."/>
            <person name="Bailey T.L."/>
            <person name="Bansal M."/>
            <person name="Baxter L."/>
            <person name="Beisel K.W."/>
            <person name="Bersano T."/>
            <person name="Bono H."/>
            <person name="Chalk A.M."/>
            <person name="Chiu K.P."/>
            <person name="Choudhary V."/>
            <person name="Christoffels A."/>
            <person name="Clutterbuck D.R."/>
            <person name="Crowe M.L."/>
            <person name="Dalla E."/>
            <person name="Dalrymple B.P."/>
            <person name="de Bono B."/>
            <person name="Della Gatta G."/>
            <person name="di Bernardo D."/>
            <person name="Down T."/>
            <person name="Engstrom P."/>
            <person name="Fagiolini M."/>
            <person name="Faulkner G."/>
            <person name="Fletcher C.F."/>
            <person name="Fukushima T."/>
            <person name="Furuno M."/>
            <person name="Futaki S."/>
            <person name="Gariboldi M."/>
            <person name="Georgii-Hemming P."/>
            <person name="Gingeras T.R."/>
            <person name="Gojobori T."/>
            <person name="Green R.E."/>
            <person name="Gustincich S."/>
            <person name="Harbers M."/>
            <person name="Hayashi Y."/>
            <person name="Hensch T.K."/>
            <person name="Hirokawa N."/>
            <person name="Hill D."/>
            <person name="Huminiecki L."/>
            <person name="Iacono M."/>
            <person name="Ikeo K."/>
            <person name="Iwama A."/>
            <person name="Ishikawa T."/>
            <person name="Jakt M."/>
            <person name="Kanapin A."/>
            <person name="Katoh M."/>
            <person name="Kawasawa Y."/>
            <person name="Kelso J."/>
            <person name="Kitamura H."/>
            <person name="Kitano H."/>
            <person name="Kollias G."/>
            <person name="Krishnan S.P."/>
            <person name="Kruger A."/>
            <person name="Kummerfeld S.K."/>
            <person name="Kurochkin I.V."/>
            <person name="Lareau L.F."/>
            <person name="Lazarevic D."/>
            <person name="Lipovich L."/>
            <person name="Liu J."/>
            <person name="Liuni S."/>
            <person name="McWilliam S."/>
            <person name="Madan Babu M."/>
            <person name="Madera M."/>
            <person name="Marchionni L."/>
            <person name="Matsuda H."/>
            <person name="Matsuzawa S."/>
            <person name="Miki H."/>
            <person name="Mignone F."/>
            <person name="Miyake S."/>
            <person name="Morris K."/>
            <person name="Mottagui-Tabar S."/>
            <person name="Mulder N."/>
            <person name="Nakano N."/>
            <person name="Nakauchi H."/>
            <person name="Ng P."/>
            <person name="Nilsson R."/>
            <person name="Nishiguchi S."/>
            <person name="Nishikawa S."/>
            <person name="Nori F."/>
            <person name="Ohara O."/>
            <person name="Okazaki Y."/>
            <person name="Orlando V."/>
            <person name="Pang K.C."/>
            <person name="Pavan W.J."/>
            <person name="Pavesi G."/>
            <person name="Pesole G."/>
            <person name="Petrovsky N."/>
            <person name="Piazza S."/>
            <person name="Reed J."/>
            <person name="Reid J.F."/>
            <person name="Ring B.Z."/>
            <person name="Ringwald M."/>
            <person name="Rost B."/>
            <person name="Ruan Y."/>
            <person name="Salzberg S.L."/>
            <person name="Sandelin A."/>
            <person name="Schneider C."/>
            <person name="Schoenbach C."/>
            <person name="Sekiguchi K."/>
            <person name="Semple C.A."/>
            <person name="Seno S."/>
            <person name="Sessa L."/>
            <person name="Sheng Y."/>
            <person name="Shibata Y."/>
            <person name="Shimada H."/>
            <person name="Shimada K."/>
            <person name="Silva D."/>
            <person name="Sinclair B."/>
            <person name="Sperling S."/>
            <person name="Stupka E."/>
            <person name="Sugiura K."/>
            <person name="Sultana R."/>
            <person name="Takenaka Y."/>
            <person name="Taki K."/>
            <person name="Tammoja K."/>
            <person name="Tan S.L."/>
            <person name="Tang S."/>
            <person name="Taylor M.S."/>
            <person name="Tegner J."/>
            <person name="Teichmann S.A."/>
            <person name="Ueda H.R."/>
            <person name="van Nimwegen E."/>
            <person name="Verardo R."/>
            <person name="Wei C.L."/>
            <person name="Yagi K."/>
            <person name="Yamanishi H."/>
            <person name="Zabarovsky E."/>
            <person name="Zhu S."/>
            <person name="Zimmer A."/>
            <person name="Hide W."/>
            <person name="Bult C."/>
            <person name="Grimmond S.M."/>
            <person name="Teasdale R.D."/>
            <person name="Liu E.T."/>
            <person name="Brusic V."/>
            <person name="Quackenbush J."/>
            <person name="Wahlestedt C."/>
            <person name="Mattick J.S."/>
            <person name="Hume D.A."/>
            <person name="Kai C."/>
            <person name="Sasaki D."/>
            <person name="Tomaru Y."/>
            <person name="Fukuda S."/>
            <person name="Kanamori-Katayama M."/>
            <person name="Suzuki M."/>
            <person name="Aoki J."/>
            <person name="Arakawa T."/>
            <person name="Iida J."/>
            <person name="Imamura K."/>
            <person name="Itoh M."/>
            <person name="Kato T."/>
            <person name="Kawaji H."/>
            <person name="Kawagashira N."/>
            <person name="Kawashima T."/>
            <person name="Kojima M."/>
            <person name="Kondo S."/>
            <person name="Konno H."/>
            <person name="Nakano K."/>
            <person name="Ninomiya N."/>
            <person name="Nishio T."/>
            <person name="Okada M."/>
            <person name="Plessy C."/>
            <person name="Shibata K."/>
            <person name="Shiraki T."/>
            <person name="Suzuki S."/>
            <person name="Tagami M."/>
            <person name="Waki K."/>
            <person name="Watahiki A."/>
            <person name="Okamura-Oho Y."/>
            <person name="Suzuki H."/>
            <person name="Kawai J."/>
            <person name="Hayashizaki Y."/>
        </authorList>
    </citation>
    <scope>NUCLEOTIDE SEQUENCE [LARGE SCALE MRNA]</scope>
    <source>
        <strain>C57BL/6J</strain>
        <tissue>Brain cortex</tissue>
    </source>
</reference>
<reference key="2">
    <citation type="journal article" date="2004" name="Genome Res.">
        <title>The status, quality, and expansion of the NIH full-length cDNA project: the Mammalian Gene Collection (MGC).</title>
        <authorList>
            <consortium name="The MGC Project Team"/>
        </authorList>
    </citation>
    <scope>NUCLEOTIDE SEQUENCE [LARGE SCALE MRNA]</scope>
    <source>
        <strain>C57BL/6J</strain>
        <tissue>Brain</tissue>
    </source>
</reference>
<organism>
    <name type="scientific">Mus musculus</name>
    <name type="common">Mouse</name>
    <dbReference type="NCBI Taxonomy" id="10090"/>
    <lineage>
        <taxon>Eukaryota</taxon>
        <taxon>Metazoa</taxon>
        <taxon>Chordata</taxon>
        <taxon>Craniata</taxon>
        <taxon>Vertebrata</taxon>
        <taxon>Euteleostomi</taxon>
        <taxon>Mammalia</taxon>
        <taxon>Eutheria</taxon>
        <taxon>Euarchontoglires</taxon>
        <taxon>Glires</taxon>
        <taxon>Rodentia</taxon>
        <taxon>Myomorpha</taxon>
        <taxon>Muroidea</taxon>
        <taxon>Muridae</taxon>
        <taxon>Murinae</taxon>
        <taxon>Mus</taxon>
        <taxon>Mus</taxon>
    </lineage>
</organism>
<name>ZN771_MOUSE</name>
<protein>
    <recommendedName>
        <fullName>Zinc finger protein 771</fullName>
    </recommendedName>
</protein>
<proteinExistence type="evidence at transcript level"/>